<reference key="1">
    <citation type="journal article" date="2009" name="Proc. Natl. Acad. Sci. U.S.A.">
        <title>The genomic basis of trophic strategy in marine bacteria.</title>
        <authorList>
            <person name="Lauro F.M."/>
            <person name="McDougald D."/>
            <person name="Thomas T."/>
            <person name="Williams T.J."/>
            <person name="Egan S."/>
            <person name="Rice S."/>
            <person name="DeMaere M.Z."/>
            <person name="Ting L."/>
            <person name="Ertan H."/>
            <person name="Johnson J."/>
            <person name="Ferriera S."/>
            <person name="Lapidus A."/>
            <person name="Anderson I."/>
            <person name="Kyrpides N."/>
            <person name="Munk A.C."/>
            <person name="Detter C."/>
            <person name="Han C.S."/>
            <person name="Brown M.V."/>
            <person name="Robb F.T."/>
            <person name="Kjelleberg S."/>
            <person name="Cavicchioli R."/>
        </authorList>
    </citation>
    <scope>NUCLEOTIDE SEQUENCE [LARGE SCALE GENOMIC DNA]</scope>
    <source>
        <strain>DSM 13593 / LMG 18877 / RB2256</strain>
    </source>
</reference>
<protein>
    <recommendedName>
        <fullName evidence="1">L-ectoine synthase</fullName>
        <ecNumber evidence="1">4.2.1.108</ecNumber>
    </recommendedName>
    <alternativeName>
        <fullName evidence="1">N-acetyldiaminobutyrate dehydratase</fullName>
    </alternativeName>
</protein>
<accession>Q1GNW6</accession>
<evidence type="ECO:0000255" key="1">
    <source>
        <dbReference type="HAMAP-Rule" id="MF_01255"/>
    </source>
</evidence>
<evidence type="ECO:0000256" key="2">
    <source>
        <dbReference type="SAM" id="MobiDB-lite"/>
    </source>
</evidence>
<evidence type="ECO:0007829" key="3">
    <source>
        <dbReference type="PDB" id="5BXX"/>
    </source>
</evidence>
<evidence type="ECO:0007829" key="4">
    <source>
        <dbReference type="PDB" id="5BY5"/>
    </source>
</evidence>
<proteinExistence type="evidence at protein level"/>
<keyword id="KW-0002">3D-structure</keyword>
<keyword id="KW-0456">Lyase</keyword>
<keyword id="KW-1185">Reference proteome</keyword>
<gene>
    <name evidence="1" type="primary">ectC</name>
    <name type="ordered locus">Sala_2951</name>
</gene>
<feature type="chain" id="PRO_1000067239" description="L-ectoine synthase">
    <location>
        <begin position="1"/>
        <end position="137"/>
    </location>
</feature>
<feature type="region of interest" description="Disordered" evidence="2">
    <location>
        <begin position="115"/>
        <end position="137"/>
    </location>
</feature>
<feature type="strand" evidence="3">
    <location>
        <begin position="2"/>
        <end position="5"/>
    </location>
</feature>
<feature type="helix" evidence="4">
    <location>
        <begin position="6"/>
        <end position="9"/>
    </location>
</feature>
<feature type="strand" evidence="4">
    <location>
        <begin position="15"/>
        <end position="18"/>
    </location>
</feature>
<feature type="strand" evidence="4">
    <location>
        <begin position="21"/>
        <end position="27"/>
    </location>
</feature>
<feature type="helix" evidence="4">
    <location>
        <begin position="29"/>
        <end position="31"/>
    </location>
</feature>
<feature type="strand" evidence="4">
    <location>
        <begin position="33"/>
        <end position="42"/>
    </location>
</feature>
<feature type="strand" evidence="3">
    <location>
        <begin position="48"/>
        <end position="51"/>
    </location>
</feature>
<feature type="strand" evidence="4">
    <location>
        <begin position="56"/>
        <end position="63"/>
    </location>
</feature>
<feature type="strand" evidence="4">
    <location>
        <begin position="66"/>
        <end position="70"/>
    </location>
</feature>
<feature type="turn" evidence="4">
    <location>
        <begin position="71"/>
        <end position="73"/>
    </location>
</feature>
<feature type="strand" evidence="4">
    <location>
        <begin position="76"/>
        <end position="79"/>
    </location>
</feature>
<feature type="strand" evidence="4">
    <location>
        <begin position="84"/>
        <end position="87"/>
    </location>
</feature>
<feature type="strand" evidence="4">
    <location>
        <begin position="93"/>
        <end position="99"/>
    </location>
</feature>
<feature type="strand" evidence="4">
    <location>
        <begin position="101"/>
        <end position="109"/>
    </location>
</feature>
<feature type="strand" evidence="3">
    <location>
        <begin position="113"/>
        <end position="115"/>
    </location>
</feature>
<feature type="turn" evidence="3">
    <location>
        <begin position="116"/>
        <end position="119"/>
    </location>
</feature>
<organism>
    <name type="scientific">Sphingopyxis alaskensis (strain DSM 13593 / LMG 18877 / RB2256)</name>
    <name type="common">Sphingomonas alaskensis</name>
    <dbReference type="NCBI Taxonomy" id="317655"/>
    <lineage>
        <taxon>Bacteria</taxon>
        <taxon>Pseudomonadati</taxon>
        <taxon>Pseudomonadota</taxon>
        <taxon>Alphaproteobacteria</taxon>
        <taxon>Sphingomonadales</taxon>
        <taxon>Sphingomonadaceae</taxon>
        <taxon>Sphingopyxis</taxon>
    </lineage>
</organism>
<sequence length="137" mass="15150">MIVRNLGDIRKTDRNVRSDGWASARMLLKDDGMGFSFHVTTLFAGSELRMHYQNHLEAVLVLKGTGTIEDLATGEVHALRPGVMYALDDHDRHIVRPETDILTACVFNPPVTGREVHDESGAYPADPELAREPVAAD</sequence>
<dbReference type="EC" id="4.2.1.108" evidence="1"/>
<dbReference type="EMBL" id="CP000356">
    <property type="protein sequence ID" value="ABF54656.1"/>
    <property type="molecule type" value="Genomic_DNA"/>
</dbReference>
<dbReference type="RefSeq" id="WP_011543220.1">
    <property type="nucleotide sequence ID" value="NC_008048.1"/>
</dbReference>
<dbReference type="PDB" id="5BXX">
    <property type="method" value="X-ray"/>
    <property type="resolution" value="2.00 A"/>
    <property type="chains" value="A/B/C/D=1-137"/>
</dbReference>
<dbReference type="PDB" id="5BY5">
    <property type="method" value="X-ray"/>
    <property type="resolution" value="1.20 A"/>
    <property type="chains" value="A=1-137"/>
</dbReference>
<dbReference type="PDBsum" id="5BXX"/>
<dbReference type="PDBsum" id="5BY5"/>
<dbReference type="SMR" id="Q1GNW6"/>
<dbReference type="STRING" id="317655.Sala_2951"/>
<dbReference type="KEGG" id="sal:Sala_2951"/>
<dbReference type="eggNOG" id="COG1917">
    <property type="taxonomic scope" value="Bacteria"/>
</dbReference>
<dbReference type="HOGENOM" id="CLU_154525_0_0_5"/>
<dbReference type="OrthoDB" id="9801830at2"/>
<dbReference type="BRENDA" id="4.2.1.108">
    <property type="organism ID" value="12995"/>
</dbReference>
<dbReference type="UniPathway" id="UPA00067">
    <property type="reaction ID" value="UER00123"/>
</dbReference>
<dbReference type="Proteomes" id="UP000006578">
    <property type="component" value="Chromosome"/>
</dbReference>
<dbReference type="GO" id="GO:0033990">
    <property type="term" value="F:ectoine synthase activity"/>
    <property type="evidence" value="ECO:0007669"/>
    <property type="project" value="UniProtKB-EC"/>
</dbReference>
<dbReference type="GO" id="GO:0019491">
    <property type="term" value="P:ectoine biosynthetic process"/>
    <property type="evidence" value="ECO:0007669"/>
    <property type="project" value="UniProtKB-UniRule"/>
</dbReference>
<dbReference type="CDD" id="cd06978">
    <property type="entry name" value="cupin_EctC"/>
    <property type="match status" value="1"/>
</dbReference>
<dbReference type="Gene3D" id="2.60.120.10">
    <property type="entry name" value="Jelly Rolls"/>
    <property type="match status" value="1"/>
</dbReference>
<dbReference type="HAMAP" id="MF_01255">
    <property type="entry name" value="Ectoine_synth"/>
    <property type="match status" value="1"/>
</dbReference>
<dbReference type="InterPro" id="IPR010462">
    <property type="entry name" value="Ectoine_synth"/>
</dbReference>
<dbReference type="InterPro" id="IPR014710">
    <property type="entry name" value="RmlC-like_jellyroll"/>
</dbReference>
<dbReference type="InterPro" id="IPR011051">
    <property type="entry name" value="RmlC_Cupin_sf"/>
</dbReference>
<dbReference type="NCBIfam" id="NF009806">
    <property type="entry name" value="PRK13290.1"/>
    <property type="match status" value="1"/>
</dbReference>
<dbReference type="PANTHER" id="PTHR39289">
    <property type="match status" value="1"/>
</dbReference>
<dbReference type="PANTHER" id="PTHR39289:SF1">
    <property type="entry name" value="L-ECTOINE SYNTHASE"/>
    <property type="match status" value="1"/>
</dbReference>
<dbReference type="Pfam" id="PF06339">
    <property type="entry name" value="Ectoine_synth"/>
    <property type="match status" value="1"/>
</dbReference>
<dbReference type="SUPFAM" id="SSF51182">
    <property type="entry name" value="RmlC-like cupins"/>
    <property type="match status" value="1"/>
</dbReference>
<comment type="function">
    <text evidence="1">Catalyzes the circularization of gamma-N-acetyl-alpha,gamma-diaminobutyric acid (ADABA) to ectoine (1,4,5,6-tetrahydro-2-methyl-4-pyrimidine carboxylic acid), which is an excellent osmoprotectant.</text>
</comment>
<comment type="catalytic activity">
    <reaction evidence="1">
        <text>(2S)-4-acetamido-2-aminobutanoate = L-ectoine + H2O</text>
        <dbReference type="Rhea" id="RHEA:17281"/>
        <dbReference type="ChEBI" id="CHEBI:15377"/>
        <dbReference type="ChEBI" id="CHEBI:58515"/>
        <dbReference type="ChEBI" id="CHEBI:58929"/>
        <dbReference type="EC" id="4.2.1.108"/>
    </reaction>
</comment>
<comment type="pathway">
    <text evidence="1">Amine and polyamine biosynthesis; ectoine biosynthesis; L-ectoine from L-aspartate 4-semialdehyde: step 3/3.</text>
</comment>
<comment type="similarity">
    <text evidence="1">Belongs to the ectoine synthase family.</text>
</comment>
<name>ECTC_SPHAL</name>